<name>FB260_ARATH</name>
<gene>
    <name type="ordered locus">At5g18160</name>
    <name type="ORF">MRG7.12</name>
</gene>
<protein>
    <recommendedName>
        <fullName>F-box protein At5g18160</fullName>
    </recommendedName>
</protein>
<evidence type="ECO:0000256" key="1">
    <source>
        <dbReference type="SAM" id="MobiDB-lite"/>
    </source>
</evidence>
<evidence type="ECO:0000305" key="2"/>
<reference key="1">
    <citation type="journal article" date="1998" name="DNA Res.">
        <title>Structural analysis of Arabidopsis thaliana chromosome 5. VI. Sequence features of the regions of 1,367,185 bp covered by 19 physically assigned P1 and TAC clones.</title>
        <authorList>
            <person name="Kotani H."/>
            <person name="Nakamura Y."/>
            <person name="Sato S."/>
            <person name="Asamizu E."/>
            <person name="Kaneko T."/>
            <person name="Miyajima N."/>
            <person name="Tabata S."/>
        </authorList>
    </citation>
    <scope>NUCLEOTIDE SEQUENCE [LARGE SCALE GENOMIC DNA]</scope>
    <source>
        <strain>cv. Columbia</strain>
    </source>
</reference>
<reference key="2">
    <citation type="journal article" date="2017" name="Plant J.">
        <title>Araport11: a complete reannotation of the Arabidopsis thaliana reference genome.</title>
        <authorList>
            <person name="Cheng C.Y."/>
            <person name="Krishnakumar V."/>
            <person name="Chan A.P."/>
            <person name="Thibaud-Nissen F."/>
            <person name="Schobel S."/>
            <person name="Town C.D."/>
        </authorList>
    </citation>
    <scope>GENOME REANNOTATION</scope>
    <source>
        <strain>cv. Columbia</strain>
    </source>
</reference>
<reference key="3">
    <citation type="submission" date="2006-12" db="EMBL/GenBank/DDBJ databases">
        <title>Arabidopsis ORF clones.</title>
        <authorList>
            <person name="Bautista V.R."/>
            <person name="Kim C.J."/>
            <person name="Chen H."/>
            <person name="Quinitio C."/>
            <person name="Ecker J.R."/>
        </authorList>
    </citation>
    <scope>NUCLEOTIDE SEQUENCE [LARGE SCALE MRNA]</scope>
    <source>
        <strain>cv. Columbia</strain>
    </source>
</reference>
<reference key="4">
    <citation type="submission" date="2004-09" db="EMBL/GenBank/DDBJ databases">
        <authorList>
            <person name="Wrobel R.L."/>
            <person name="Kimball T.L."/>
            <person name="Riters M.A."/>
            <person name="Steffen E."/>
            <person name="Thao S."/>
            <person name="Aceti D.J."/>
            <person name="Blommel P.G."/>
            <person name="Newman C.S."/>
            <person name="Zhao Q."/>
            <person name="Fox B.G."/>
            <person name="Phillips G.N. Jr."/>
            <person name="Markley J.L."/>
        </authorList>
    </citation>
    <scope>NUCLEOTIDE SEQUENCE [LARGE SCALE MRNA] OF 2-379</scope>
</reference>
<organism>
    <name type="scientific">Arabidopsis thaliana</name>
    <name type="common">Mouse-ear cress</name>
    <dbReference type="NCBI Taxonomy" id="3702"/>
    <lineage>
        <taxon>Eukaryota</taxon>
        <taxon>Viridiplantae</taxon>
        <taxon>Streptophyta</taxon>
        <taxon>Embryophyta</taxon>
        <taxon>Tracheophyta</taxon>
        <taxon>Spermatophyta</taxon>
        <taxon>Magnoliopsida</taxon>
        <taxon>eudicotyledons</taxon>
        <taxon>Gunneridae</taxon>
        <taxon>Pentapetalae</taxon>
        <taxon>rosids</taxon>
        <taxon>malvids</taxon>
        <taxon>Brassicales</taxon>
        <taxon>Brassicaceae</taxon>
        <taxon>Camelineae</taxon>
        <taxon>Arabidopsis</taxon>
    </lineage>
</organism>
<feature type="chain" id="PRO_0000283527" description="F-box protein At5g18160">
    <location>
        <begin position="1"/>
        <end position="379"/>
    </location>
</feature>
<feature type="domain" description="F-box">
    <location>
        <begin position="28"/>
        <end position="74"/>
    </location>
</feature>
<feature type="region of interest" description="Disordered" evidence="1">
    <location>
        <begin position="1"/>
        <end position="26"/>
    </location>
</feature>
<feature type="compositionally biased region" description="Polar residues" evidence="1">
    <location>
        <begin position="11"/>
        <end position="26"/>
    </location>
</feature>
<feature type="sequence conflict" description="In Ref. 3; BT015507." evidence="2" ref="3">
    <original>I</original>
    <variation>V</variation>
    <location>
        <position position="121"/>
    </location>
</feature>
<proteinExistence type="evidence at transcript level"/>
<sequence length="379" mass="43697">MDKQDEKKQGTTKSSSTLTTRCSHGNHISQSNSIPLDITIEILSRLPAKSIVRSRSVSKLWSSITTTPEFIKHRSKKTSPPCVLLIFRKHDKLIVFSSPQHQNTYSHVQDYHIEIPKNGFIRRLDSVHGLICLEGSKQLVICNPTLKRFFPLPEPQGTGDEYNVGGFLGYEPIEGKYKALCIVRGWNTQVLTLEIQESWRVTKPGYTHWPTKDTGRCINGVIYYKAIIFDRVPRHVIFGFDLRYEEFTHIEFPMRNYDRFLMVSYEGRLALISSTSSVVEIWSLEDAGNRKWSYEQFHLCLPPNTSLKGVIDAGELIYTGFSLNRSFCVVYFDPKKNNIRETKFQGIADNQIWQPDRLGFDLVNDFYVLPNHIESFISF</sequence>
<dbReference type="EMBL" id="AB012246">
    <property type="protein sequence ID" value="BAB09474.1"/>
    <property type="molecule type" value="Genomic_DNA"/>
</dbReference>
<dbReference type="EMBL" id="CP002688">
    <property type="protein sequence ID" value="AED92514.1"/>
    <property type="molecule type" value="Genomic_DNA"/>
</dbReference>
<dbReference type="EMBL" id="BT029543">
    <property type="protein sequence ID" value="ABL66799.1"/>
    <property type="molecule type" value="mRNA"/>
</dbReference>
<dbReference type="EMBL" id="BT015507">
    <property type="status" value="NOT_ANNOTATED_CDS"/>
    <property type="molecule type" value="mRNA"/>
</dbReference>
<dbReference type="RefSeq" id="NP_197317.1">
    <property type="nucleotide sequence ID" value="NM_121821.1"/>
</dbReference>
<dbReference type="SMR" id="Q9FK54"/>
<dbReference type="FunCoup" id="Q9FK54">
    <property type="interactions" value="12"/>
</dbReference>
<dbReference type="STRING" id="3702.Q9FK54"/>
<dbReference type="PaxDb" id="3702-AT5G18160.1"/>
<dbReference type="DNASU" id="831934"/>
<dbReference type="EnsemblPlants" id="AT5G18160.1">
    <property type="protein sequence ID" value="AT5G18160.1"/>
    <property type="gene ID" value="AT5G18160"/>
</dbReference>
<dbReference type="GeneID" id="831934"/>
<dbReference type="Gramene" id="AT5G18160.1">
    <property type="protein sequence ID" value="AT5G18160.1"/>
    <property type="gene ID" value="AT5G18160"/>
</dbReference>
<dbReference type="KEGG" id="ath:AT5G18160"/>
<dbReference type="Araport" id="AT5G18160"/>
<dbReference type="TAIR" id="AT5G18160"/>
<dbReference type="HOGENOM" id="CLU_027176_8_0_1"/>
<dbReference type="InParanoid" id="Q9FK54"/>
<dbReference type="OMA" id="RIPANNI"/>
<dbReference type="PhylomeDB" id="Q9FK54"/>
<dbReference type="PRO" id="PR:Q9FK54"/>
<dbReference type="Proteomes" id="UP000006548">
    <property type="component" value="Chromosome 5"/>
</dbReference>
<dbReference type="ExpressionAtlas" id="Q9FK54">
    <property type="expression patterns" value="differential"/>
</dbReference>
<dbReference type="CDD" id="cd22157">
    <property type="entry name" value="F-box_AtFBW1-like"/>
    <property type="match status" value="1"/>
</dbReference>
<dbReference type="Gene3D" id="1.20.1280.50">
    <property type="match status" value="1"/>
</dbReference>
<dbReference type="InterPro" id="IPR013187">
    <property type="entry name" value="F-box-assoc_dom_typ3"/>
</dbReference>
<dbReference type="InterPro" id="IPR017451">
    <property type="entry name" value="F-box-assoc_interact_dom"/>
</dbReference>
<dbReference type="InterPro" id="IPR036047">
    <property type="entry name" value="F-box-like_dom_sf"/>
</dbReference>
<dbReference type="InterPro" id="IPR001810">
    <property type="entry name" value="F-box_dom"/>
</dbReference>
<dbReference type="NCBIfam" id="TIGR01640">
    <property type="entry name" value="F_box_assoc_1"/>
    <property type="match status" value="1"/>
</dbReference>
<dbReference type="PANTHER" id="PTHR31111">
    <property type="entry name" value="BNAA05G37150D PROTEIN-RELATED"/>
    <property type="match status" value="1"/>
</dbReference>
<dbReference type="PANTHER" id="PTHR31111:SF132">
    <property type="entry name" value="F-BOX ASSOCIATED UBIQUITINATION EFFECTOR FAMILY PROTEIN-RELATED"/>
    <property type="match status" value="1"/>
</dbReference>
<dbReference type="Pfam" id="PF00646">
    <property type="entry name" value="F-box"/>
    <property type="match status" value="1"/>
</dbReference>
<dbReference type="Pfam" id="PF08268">
    <property type="entry name" value="FBA_3"/>
    <property type="match status" value="1"/>
</dbReference>
<dbReference type="SMART" id="SM00256">
    <property type="entry name" value="FBOX"/>
    <property type="match status" value="1"/>
</dbReference>
<dbReference type="SUPFAM" id="SSF81383">
    <property type="entry name" value="F-box domain"/>
    <property type="match status" value="1"/>
</dbReference>
<accession>Q9FK54</accession>
<keyword id="KW-1185">Reference proteome</keyword>